<reference key="1">
    <citation type="journal article" date="2006" name="Nature">
        <title>The DNA sequence and biological annotation of human chromosome 1.</title>
        <authorList>
            <person name="Gregory S.G."/>
            <person name="Barlow K.F."/>
            <person name="McLay K.E."/>
            <person name="Kaul R."/>
            <person name="Swarbreck D."/>
            <person name="Dunham A."/>
            <person name="Scott C.E."/>
            <person name="Howe K.L."/>
            <person name="Woodfine K."/>
            <person name="Spencer C.C.A."/>
            <person name="Jones M.C."/>
            <person name="Gillson C."/>
            <person name="Searle S."/>
            <person name="Zhou Y."/>
            <person name="Kokocinski F."/>
            <person name="McDonald L."/>
            <person name="Evans R."/>
            <person name="Phillips K."/>
            <person name="Atkinson A."/>
            <person name="Cooper R."/>
            <person name="Jones C."/>
            <person name="Hall R.E."/>
            <person name="Andrews T.D."/>
            <person name="Lloyd C."/>
            <person name="Ainscough R."/>
            <person name="Almeida J.P."/>
            <person name="Ambrose K.D."/>
            <person name="Anderson F."/>
            <person name="Andrew R.W."/>
            <person name="Ashwell R.I.S."/>
            <person name="Aubin K."/>
            <person name="Babbage A.K."/>
            <person name="Bagguley C.L."/>
            <person name="Bailey J."/>
            <person name="Beasley H."/>
            <person name="Bethel G."/>
            <person name="Bird C.P."/>
            <person name="Bray-Allen S."/>
            <person name="Brown J.Y."/>
            <person name="Brown A.J."/>
            <person name="Buckley D."/>
            <person name="Burton J."/>
            <person name="Bye J."/>
            <person name="Carder C."/>
            <person name="Chapman J.C."/>
            <person name="Clark S.Y."/>
            <person name="Clarke G."/>
            <person name="Clee C."/>
            <person name="Cobley V."/>
            <person name="Collier R.E."/>
            <person name="Corby N."/>
            <person name="Coville G.J."/>
            <person name="Davies J."/>
            <person name="Deadman R."/>
            <person name="Dunn M."/>
            <person name="Earthrowl M."/>
            <person name="Ellington A.G."/>
            <person name="Errington H."/>
            <person name="Frankish A."/>
            <person name="Frankland J."/>
            <person name="French L."/>
            <person name="Garner P."/>
            <person name="Garnett J."/>
            <person name="Gay L."/>
            <person name="Ghori M.R.J."/>
            <person name="Gibson R."/>
            <person name="Gilby L.M."/>
            <person name="Gillett W."/>
            <person name="Glithero R.J."/>
            <person name="Grafham D.V."/>
            <person name="Griffiths C."/>
            <person name="Griffiths-Jones S."/>
            <person name="Grocock R."/>
            <person name="Hammond S."/>
            <person name="Harrison E.S.I."/>
            <person name="Hart E."/>
            <person name="Haugen E."/>
            <person name="Heath P.D."/>
            <person name="Holmes S."/>
            <person name="Holt K."/>
            <person name="Howden P.J."/>
            <person name="Hunt A.R."/>
            <person name="Hunt S.E."/>
            <person name="Hunter G."/>
            <person name="Isherwood J."/>
            <person name="James R."/>
            <person name="Johnson C."/>
            <person name="Johnson D."/>
            <person name="Joy A."/>
            <person name="Kay M."/>
            <person name="Kershaw J.K."/>
            <person name="Kibukawa M."/>
            <person name="Kimberley A.M."/>
            <person name="King A."/>
            <person name="Knights A.J."/>
            <person name="Lad H."/>
            <person name="Laird G."/>
            <person name="Lawlor S."/>
            <person name="Leongamornlert D.A."/>
            <person name="Lloyd D.M."/>
            <person name="Loveland J."/>
            <person name="Lovell J."/>
            <person name="Lush M.J."/>
            <person name="Lyne R."/>
            <person name="Martin S."/>
            <person name="Mashreghi-Mohammadi M."/>
            <person name="Matthews L."/>
            <person name="Matthews N.S.W."/>
            <person name="McLaren S."/>
            <person name="Milne S."/>
            <person name="Mistry S."/>
            <person name="Moore M.J.F."/>
            <person name="Nickerson T."/>
            <person name="O'Dell C.N."/>
            <person name="Oliver K."/>
            <person name="Palmeiri A."/>
            <person name="Palmer S.A."/>
            <person name="Parker A."/>
            <person name="Patel D."/>
            <person name="Pearce A.V."/>
            <person name="Peck A.I."/>
            <person name="Pelan S."/>
            <person name="Phelps K."/>
            <person name="Phillimore B.J."/>
            <person name="Plumb R."/>
            <person name="Rajan J."/>
            <person name="Raymond C."/>
            <person name="Rouse G."/>
            <person name="Saenphimmachak C."/>
            <person name="Sehra H.K."/>
            <person name="Sheridan E."/>
            <person name="Shownkeen R."/>
            <person name="Sims S."/>
            <person name="Skuce C.D."/>
            <person name="Smith M."/>
            <person name="Steward C."/>
            <person name="Subramanian S."/>
            <person name="Sycamore N."/>
            <person name="Tracey A."/>
            <person name="Tromans A."/>
            <person name="Van Helmond Z."/>
            <person name="Wall M."/>
            <person name="Wallis J.M."/>
            <person name="White S."/>
            <person name="Whitehead S.L."/>
            <person name="Wilkinson J.E."/>
            <person name="Willey D.L."/>
            <person name="Williams H."/>
            <person name="Wilming L."/>
            <person name="Wray P.W."/>
            <person name="Wu Z."/>
            <person name="Coulson A."/>
            <person name="Vaudin M."/>
            <person name="Sulston J.E."/>
            <person name="Durbin R.M."/>
            <person name="Hubbard T."/>
            <person name="Wooster R."/>
            <person name="Dunham I."/>
            <person name="Carter N.P."/>
            <person name="McVean G."/>
            <person name="Ross M.T."/>
            <person name="Harrow J."/>
            <person name="Olson M.V."/>
            <person name="Beck S."/>
            <person name="Rogers J."/>
            <person name="Bentley D.R."/>
        </authorList>
    </citation>
    <scope>NUCLEOTIDE SEQUENCE [LARGE SCALE GENOMIC DNA]</scope>
</reference>
<reference key="2">
    <citation type="journal article" date="2004" name="Genome Res.">
        <title>The status, quality, and expansion of the NIH full-length cDNA project: the Mammalian Gene Collection (MGC).</title>
        <authorList>
            <consortium name="The MGC Project Team"/>
        </authorList>
    </citation>
    <scope>NUCLEOTIDE SEQUENCE [LARGE SCALE MRNA]</scope>
    <source>
        <tissue>Melanoma</tissue>
    </source>
</reference>
<comment type="similarity">
    <text evidence="2">Belongs to the FAM167 (SEC) family.</text>
</comment>
<dbReference type="EMBL" id="AL121991">
    <property type="status" value="NOT_ANNOTATED_CDS"/>
    <property type="molecule type" value="Genomic_DNA"/>
</dbReference>
<dbReference type="EMBL" id="BC004269">
    <property type="protein sequence ID" value="AAH04269.2"/>
    <property type="molecule type" value="mRNA"/>
</dbReference>
<dbReference type="CCDS" id="CCDS358.2"/>
<dbReference type="RefSeq" id="NP_116037.2">
    <property type="nucleotide sequence ID" value="NM_032648.3"/>
</dbReference>
<dbReference type="SMR" id="Q9BTA0"/>
<dbReference type="BioGRID" id="124229">
    <property type="interactions" value="2"/>
</dbReference>
<dbReference type="FunCoup" id="Q9BTA0">
    <property type="interactions" value="1"/>
</dbReference>
<dbReference type="STRING" id="9606.ENSP00000362684"/>
<dbReference type="iPTMnet" id="Q9BTA0"/>
<dbReference type="PhosphoSitePlus" id="Q9BTA0"/>
<dbReference type="BioMuta" id="FAM167B"/>
<dbReference type="DMDM" id="125987799"/>
<dbReference type="MassIVE" id="Q9BTA0"/>
<dbReference type="PaxDb" id="9606-ENSP00000362684"/>
<dbReference type="PeptideAtlas" id="Q9BTA0"/>
<dbReference type="ProteomicsDB" id="78962"/>
<dbReference type="Antibodypedia" id="31270">
    <property type="antibodies" value="19 antibodies from 12 providers"/>
</dbReference>
<dbReference type="DNASU" id="84734"/>
<dbReference type="Ensembl" id="ENST00000373582.4">
    <property type="protein sequence ID" value="ENSP00000362684.3"/>
    <property type="gene ID" value="ENSG00000183615.6"/>
</dbReference>
<dbReference type="GeneID" id="84734"/>
<dbReference type="KEGG" id="hsa:84734"/>
<dbReference type="MANE-Select" id="ENST00000373582.4">
    <property type="protein sequence ID" value="ENSP00000362684.3"/>
    <property type="RefSeq nucleotide sequence ID" value="NM_032648.3"/>
    <property type="RefSeq protein sequence ID" value="NP_116037.2"/>
</dbReference>
<dbReference type="UCSC" id="uc001buw.4">
    <property type="organism name" value="human"/>
</dbReference>
<dbReference type="AGR" id="HGNC:28133"/>
<dbReference type="CTD" id="84734"/>
<dbReference type="GeneCards" id="FAM167B"/>
<dbReference type="HGNC" id="HGNC:28133">
    <property type="gene designation" value="FAM167B"/>
</dbReference>
<dbReference type="HPA" id="ENSG00000183615">
    <property type="expression patterns" value="Tissue enhanced (kidney)"/>
</dbReference>
<dbReference type="neXtProt" id="NX_Q9BTA0"/>
<dbReference type="OpenTargets" id="ENSG00000183615"/>
<dbReference type="PharmGKB" id="PA162387068"/>
<dbReference type="VEuPathDB" id="HostDB:ENSG00000183615"/>
<dbReference type="eggNOG" id="ENOG502S04N">
    <property type="taxonomic scope" value="Eukaryota"/>
</dbReference>
<dbReference type="GeneTree" id="ENSGT00940000159693"/>
<dbReference type="HOGENOM" id="CLU_111170_0_0_1"/>
<dbReference type="InParanoid" id="Q9BTA0"/>
<dbReference type="OMA" id="IPPKMAF"/>
<dbReference type="OrthoDB" id="5965452at2759"/>
<dbReference type="PAN-GO" id="Q9BTA0">
    <property type="GO annotations" value="0 GO annotations based on evolutionary models"/>
</dbReference>
<dbReference type="PhylomeDB" id="Q9BTA0"/>
<dbReference type="TreeFam" id="TF330468"/>
<dbReference type="PathwayCommons" id="Q9BTA0"/>
<dbReference type="BioGRID-ORCS" id="84734">
    <property type="hits" value="14 hits in 1140 CRISPR screens"/>
</dbReference>
<dbReference type="GenomeRNAi" id="84734"/>
<dbReference type="Pharos" id="Q9BTA0">
    <property type="development level" value="Tdark"/>
</dbReference>
<dbReference type="PRO" id="PR:Q9BTA0"/>
<dbReference type="Proteomes" id="UP000005640">
    <property type="component" value="Chromosome 1"/>
</dbReference>
<dbReference type="RNAct" id="Q9BTA0">
    <property type="molecule type" value="protein"/>
</dbReference>
<dbReference type="Bgee" id="ENSG00000183615">
    <property type="expression patterns" value="Expressed in male germ line stem cell (sensu Vertebrata) in testis and 111 other cell types or tissues"/>
</dbReference>
<dbReference type="InterPro" id="IPR024280">
    <property type="entry name" value="FAM167"/>
</dbReference>
<dbReference type="InterPro" id="IPR051771">
    <property type="entry name" value="FAM167_domain"/>
</dbReference>
<dbReference type="PANTHER" id="PTHR32289">
    <property type="entry name" value="PROTEIN FAM167A"/>
    <property type="match status" value="1"/>
</dbReference>
<dbReference type="PANTHER" id="PTHR32289:SF4">
    <property type="entry name" value="PROTEIN FAM167B"/>
    <property type="match status" value="1"/>
</dbReference>
<dbReference type="Pfam" id="PF11652">
    <property type="entry name" value="FAM167"/>
    <property type="match status" value="1"/>
</dbReference>
<evidence type="ECO:0000255" key="1"/>
<evidence type="ECO:0000305" key="2"/>
<proteinExistence type="evidence at protein level"/>
<keyword id="KW-0175">Coiled coil</keyword>
<keyword id="KW-1267">Proteomics identification</keyword>
<keyword id="KW-1185">Reference proteome</keyword>
<protein>
    <recommendedName>
        <fullName>Protein FAM167B</fullName>
    </recommendedName>
</protein>
<accession>Q9BTA0</accession>
<accession>Q5TDH6</accession>
<sequence length="163" mass="18414">MSLGLLKFQAVGEEDEEDEEGESLDSVKALTAKLQLQTRRPSYLEWTAQVQSQAWRRAQAKPGPGGPGDICGFDSMDSALEWLRRELREMQAQDRQLAGQLLRLRAQLHRLKMDQACHLHQELLDEAELELELEPGAGLALAPLLRHLGLTRMNISARRFTLC</sequence>
<feature type="chain" id="PRO_0000221434" description="Protein FAM167B">
    <location>
        <begin position="1"/>
        <end position="163"/>
    </location>
</feature>
<feature type="coiled-coil region" evidence="1">
    <location>
        <begin position="73"/>
        <end position="132"/>
    </location>
</feature>
<gene>
    <name type="primary">FAM167B</name>
    <name type="synonym">C1orf90</name>
</gene>
<name>F167B_HUMAN</name>
<organism>
    <name type="scientific">Homo sapiens</name>
    <name type="common">Human</name>
    <dbReference type="NCBI Taxonomy" id="9606"/>
    <lineage>
        <taxon>Eukaryota</taxon>
        <taxon>Metazoa</taxon>
        <taxon>Chordata</taxon>
        <taxon>Craniata</taxon>
        <taxon>Vertebrata</taxon>
        <taxon>Euteleostomi</taxon>
        <taxon>Mammalia</taxon>
        <taxon>Eutheria</taxon>
        <taxon>Euarchontoglires</taxon>
        <taxon>Primates</taxon>
        <taxon>Haplorrhini</taxon>
        <taxon>Catarrhini</taxon>
        <taxon>Hominidae</taxon>
        <taxon>Homo</taxon>
    </lineage>
</organism>